<name>MYHW_BOMMX</name>
<sequence length="142" mass="15657">MIFKYIVAVSFLIASGYARSVKNDEQSLSQREVLEEESLREIRGIGGALLSVGKSALKGLAKGFAEHFGKRTAEDHEVMKRLEAVIRDLDSLDHSEEASERETRGFNQEEIANLFTKKEKRILGPVLGLVSNAIGGLIKKIG</sequence>
<comment type="function">
    <text evidence="1">Maximin-y shows antimicrobial activity against bacteria and against the fungus C.albicans. It has little hemolytic activity (By similarity).</text>
</comment>
<comment type="function">
    <text evidence="1">Maximin-Hw shows antimicrobial activity against bacteria and against the fungus C.albicans. Shows strong hemolytic activity (By similarity).</text>
</comment>
<comment type="subcellular location">
    <subcellularLocation>
        <location>Secreted</location>
    </subcellularLocation>
</comment>
<comment type="tissue specificity">
    <text>Expressed by the skin glands.</text>
</comment>
<comment type="similarity">
    <text evidence="3">Belongs to the bombinin family.</text>
</comment>
<organism>
    <name type="scientific">Bombina maxima</name>
    <name type="common">Giant fire-bellied toad</name>
    <name type="synonym">Chinese red belly toad</name>
    <dbReference type="NCBI Taxonomy" id="161274"/>
    <lineage>
        <taxon>Eukaryota</taxon>
        <taxon>Metazoa</taxon>
        <taxon>Chordata</taxon>
        <taxon>Craniata</taxon>
        <taxon>Vertebrata</taxon>
        <taxon>Euteleostomi</taxon>
        <taxon>Amphibia</taxon>
        <taxon>Batrachia</taxon>
        <taxon>Anura</taxon>
        <taxon>Bombinatoridae</taxon>
        <taxon>Bombina</taxon>
    </lineage>
</organism>
<dbReference type="EMBL" id="AY847752">
    <property type="protein sequence ID" value="AAX50246.1"/>
    <property type="molecule type" value="Genomic_DNA"/>
</dbReference>
<dbReference type="SMR" id="Q58T92"/>
<dbReference type="GO" id="GO:0005576">
    <property type="term" value="C:extracellular region"/>
    <property type="evidence" value="ECO:0007669"/>
    <property type="project" value="UniProtKB-SubCell"/>
</dbReference>
<dbReference type="GO" id="GO:0042742">
    <property type="term" value="P:defense response to bacterium"/>
    <property type="evidence" value="ECO:0007669"/>
    <property type="project" value="UniProtKB-KW"/>
</dbReference>
<dbReference type="GO" id="GO:0050832">
    <property type="term" value="P:defense response to fungus"/>
    <property type="evidence" value="ECO:0007669"/>
    <property type="project" value="UniProtKB-KW"/>
</dbReference>
<dbReference type="GO" id="GO:0031640">
    <property type="term" value="P:killing of cells of another organism"/>
    <property type="evidence" value="ECO:0007669"/>
    <property type="project" value="UniProtKB-KW"/>
</dbReference>
<dbReference type="InterPro" id="IPR007962">
    <property type="entry name" value="Bombinin"/>
</dbReference>
<dbReference type="Pfam" id="PF05298">
    <property type="entry name" value="Bombinin"/>
    <property type="match status" value="1"/>
</dbReference>
<protein>
    <recommendedName>
        <fullName>Maximins y/Hw</fullName>
    </recommendedName>
    <component>
        <recommendedName>
            <fullName>Maximin-y</fullName>
        </recommendedName>
    </component>
    <component>
        <recommendedName>
            <fullName>Maximin-Hw</fullName>
        </recommendedName>
    </component>
</protein>
<feature type="signal peptide" evidence="2">
    <location>
        <begin position="1"/>
        <end position="18"/>
    </location>
</feature>
<feature type="propeptide" id="PRO_0000003252" evidence="1">
    <location>
        <begin position="19"/>
        <end position="43"/>
    </location>
</feature>
<feature type="peptide" id="PRO_0000003253" description="Maximin-y">
    <location>
        <begin position="44"/>
        <end position="68"/>
    </location>
</feature>
<feature type="propeptide" id="PRO_0000003254" evidence="3">
    <location>
        <begin position="72"/>
        <end position="121"/>
    </location>
</feature>
<feature type="peptide" id="PRO_0000003255" description="Maximin-Hw">
    <location>
        <begin position="122"/>
        <end position="141"/>
    </location>
</feature>
<feature type="modified residue" description="Phenylalanine amide" evidence="3">
    <location>
        <position position="68"/>
    </location>
</feature>
<feature type="modified residue" description="Isoleucine amide" evidence="3">
    <location>
        <position position="141"/>
    </location>
</feature>
<accession>Q58T92</accession>
<proteinExistence type="evidence at transcript level"/>
<reference key="1">
    <citation type="journal article" date="2005" name="Eur. J. Immunol.">
        <title>Variety of antimicrobial peptides in the Bombina maxima toad and evidence of their rapid diversification.</title>
        <authorList>
            <person name="Lee W.-H."/>
            <person name="Li Y."/>
            <person name="Lai R."/>
            <person name="Li S."/>
            <person name="Zhang Y."/>
            <person name="Wang W."/>
        </authorList>
    </citation>
    <scope>NUCLEOTIDE SEQUENCE [GENOMIC DNA]</scope>
    <source>
        <tissue>Skin</tissue>
    </source>
</reference>
<keyword id="KW-0027">Amidation</keyword>
<keyword id="KW-0878">Amphibian defense peptide</keyword>
<keyword id="KW-0044">Antibiotic</keyword>
<keyword id="KW-0929">Antimicrobial</keyword>
<keyword id="KW-0165">Cleavage on pair of basic residues</keyword>
<keyword id="KW-0204">Cytolysis</keyword>
<keyword id="KW-0295">Fungicide</keyword>
<keyword id="KW-0354">Hemolysis</keyword>
<keyword id="KW-0964">Secreted</keyword>
<keyword id="KW-0732">Signal</keyword>
<evidence type="ECO:0000250" key="1"/>
<evidence type="ECO:0000255" key="2"/>
<evidence type="ECO:0000305" key="3"/>